<evidence type="ECO:0000255" key="1"/>
<evidence type="ECO:0000255" key="2">
    <source>
        <dbReference type="PROSITE-ProRule" id="PRU00041"/>
    </source>
</evidence>
<evidence type="ECO:0000255" key="3">
    <source>
        <dbReference type="PROSITE-ProRule" id="PRU01114"/>
    </source>
</evidence>
<evidence type="ECO:0000256" key="4">
    <source>
        <dbReference type="SAM" id="MobiDB-lite"/>
    </source>
</evidence>
<evidence type="ECO:0000269" key="5">
    <source>
    </source>
</evidence>
<evidence type="ECO:0000305" key="6"/>
<dbReference type="EMBL" id="AC005278">
    <property type="protein sequence ID" value="AAC72128.2"/>
    <property type="molecule type" value="Genomic_DNA"/>
</dbReference>
<dbReference type="EMBL" id="CP002684">
    <property type="protein sequence ID" value="AEE27565.1"/>
    <property type="molecule type" value="Genomic_DNA"/>
</dbReference>
<dbReference type="EMBL" id="AY120771">
    <property type="protein sequence ID" value="AAM53329.1"/>
    <property type="molecule type" value="mRNA"/>
</dbReference>
<dbReference type="PIR" id="E86165">
    <property type="entry name" value="E86165"/>
</dbReference>
<dbReference type="RefSeq" id="NP_171836.3">
    <property type="nucleotide sequence ID" value="NM_100219.5"/>
</dbReference>
<dbReference type="SMR" id="Q9ZVT9"/>
<dbReference type="FunCoup" id="Q9ZVT9">
    <property type="interactions" value="1068"/>
</dbReference>
<dbReference type="STRING" id="3702.Q9ZVT9"/>
<dbReference type="iPTMnet" id="Q9ZVT9"/>
<dbReference type="PaxDb" id="3702-AT1G03370.1"/>
<dbReference type="ProteomicsDB" id="240257"/>
<dbReference type="EnsemblPlants" id="AT1G03370.1">
    <property type="protein sequence ID" value="AT1G03370.1"/>
    <property type="gene ID" value="AT1G03370"/>
</dbReference>
<dbReference type="GeneID" id="839519"/>
<dbReference type="Gramene" id="AT1G03370.1">
    <property type="protein sequence ID" value="AT1G03370.1"/>
    <property type="gene ID" value="AT1G03370"/>
</dbReference>
<dbReference type="KEGG" id="ath:AT1G03370"/>
<dbReference type="Araport" id="AT1G03370"/>
<dbReference type="TAIR" id="AT1G03370"/>
<dbReference type="eggNOG" id="KOG1032">
    <property type="taxonomic scope" value="Eukaryota"/>
</dbReference>
<dbReference type="HOGENOM" id="CLU_009431_0_0_1"/>
<dbReference type="InParanoid" id="Q9ZVT9"/>
<dbReference type="OMA" id="FIYVFSH"/>
<dbReference type="PRO" id="PR:Q9ZVT9"/>
<dbReference type="Proteomes" id="UP000006548">
    <property type="component" value="Chromosome 1"/>
</dbReference>
<dbReference type="ExpressionAtlas" id="Q9ZVT9">
    <property type="expression patterns" value="baseline and differential"/>
</dbReference>
<dbReference type="GO" id="GO:0016020">
    <property type="term" value="C:membrane"/>
    <property type="evidence" value="ECO:0007669"/>
    <property type="project" value="UniProtKB-SubCell"/>
</dbReference>
<dbReference type="GO" id="GO:0046872">
    <property type="term" value="F:metal ion binding"/>
    <property type="evidence" value="ECO:0007669"/>
    <property type="project" value="UniProtKB-KW"/>
</dbReference>
<dbReference type="CDD" id="cd00030">
    <property type="entry name" value="C2"/>
    <property type="match status" value="2"/>
</dbReference>
<dbReference type="CDD" id="cd13219">
    <property type="entry name" value="PH-GRAM_C2-GRAM"/>
    <property type="match status" value="1"/>
</dbReference>
<dbReference type="Gene3D" id="2.60.40.150">
    <property type="entry name" value="C2 domain"/>
    <property type="match status" value="2"/>
</dbReference>
<dbReference type="Gene3D" id="2.30.29.30">
    <property type="entry name" value="Pleckstrin-homology domain (PH domain)/Phosphotyrosine-binding domain (PTB)"/>
    <property type="match status" value="1"/>
</dbReference>
<dbReference type="InterPro" id="IPR044511">
    <property type="entry name" value="At1g03370/At5g50170-like"/>
</dbReference>
<dbReference type="InterPro" id="IPR000008">
    <property type="entry name" value="C2_dom"/>
</dbReference>
<dbReference type="InterPro" id="IPR035892">
    <property type="entry name" value="C2_domain_sf"/>
</dbReference>
<dbReference type="InterPro" id="IPR004182">
    <property type="entry name" value="GRAM"/>
</dbReference>
<dbReference type="InterPro" id="IPR011993">
    <property type="entry name" value="PH-like_dom_sf"/>
</dbReference>
<dbReference type="InterPro" id="IPR031968">
    <property type="entry name" value="VASt"/>
</dbReference>
<dbReference type="PANTHER" id="PTHR46296">
    <property type="entry name" value="BNAA05G37250D PROTEIN"/>
    <property type="match status" value="1"/>
</dbReference>
<dbReference type="PANTHER" id="PTHR46296:SF8">
    <property type="entry name" value="OS06G0297800 PROTEIN"/>
    <property type="match status" value="1"/>
</dbReference>
<dbReference type="Pfam" id="PF00168">
    <property type="entry name" value="C2"/>
    <property type="match status" value="2"/>
</dbReference>
<dbReference type="Pfam" id="PF02893">
    <property type="entry name" value="GRAM"/>
    <property type="match status" value="1"/>
</dbReference>
<dbReference type="Pfam" id="PF16016">
    <property type="entry name" value="VASt"/>
    <property type="match status" value="2"/>
</dbReference>
<dbReference type="PRINTS" id="PR00360">
    <property type="entry name" value="C2DOMAIN"/>
</dbReference>
<dbReference type="SMART" id="SM00239">
    <property type="entry name" value="C2"/>
    <property type="match status" value="2"/>
</dbReference>
<dbReference type="SMART" id="SM00568">
    <property type="entry name" value="GRAM"/>
    <property type="match status" value="1"/>
</dbReference>
<dbReference type="SUPFAM" id="SSF49562">
    <property type="entry name" value="C2 domain (Calcium/lipid-binding domain, CaLB)"/>
    <property type="match status" value="2"/>
</dbReference>
<dbReference type="PROSITE" id="PS50004">
    <property type="entry name" value="C2"/>
    <property type="match status" value="2"/>
</dbReference>
<dbReference type="PROSITE" id="PS51778">
    <property type="entry name" value="VAST"/>
    <property type="match status" value="2"/>
</dbReference>
<keyword id="KW-0106">Calcium</keyword>
<keyword id="KW-0472">Membrane</keyword>
<keyword id="KW-0479">Metal-binding</keyword>
<keyword id="KW-1185">Reference proteome</keyword>
<keyword id="KW-0677">Repeat</keyword>
<keyword id="KW-0812">Transmembrane</keyword>
<keyword id="KW-1133">Transmembrane helix</keyword>
<name>C2GR1_ARATH</name>
<organism>
    <name type="scientific">Arabidopsis thaliana</name>
    <name type="common">Mouse-ear cress</name>
    <dbReference type="NCBI Taxonomy" id="3702"/>
    <lineage>
        <taxon>Eukaryota</taxon>
        <taxon>Viridiplantae</taxon>
        <taxon>Streptophyta</taxon>
        <taxon>Embryophyta</taxon>
        <taxon>Tracheophyta</taxon>
        <taxon>Spermatophyta</taxon>
        <taxon>Magnoliopsida</taxon>
        <taxon>eudicotyledons</taxon>
        <taxon>Gunneridae</taxon>
        <taxon>Pentapetalae</taxon>
        <taxon>rosids</taxon>
        <taxon>malvids</taxon>
        <taxon>Brassicales</taxon>
        <taxon>Brassicaceae</taxon>
        <taxon>Camelineae</taxon>
        <taxon>Arabidopsis</taxon>
    </lineage>
</organism>
<comment type="cofactor">
    <cofactor evidence="2">
        <name>Ca(2+)</name>
        <dbReference type="ChEBI" id="CHEBI:29108"/>
    </cofactor>
</comment>
<comment type="subcellular location">
    <subcellularLocation>
        <location evidence="6">Membrane</location>
        <topology evidence="6">Single-pass membrane protein</topology>
    </subcellularLocation>
</comment>
<comment type="induction">
    <text evidence="5">Up-regulated by Cold. Down-regulated by salt.</text>
</comment>
<feature type="chain" id="PRO_0000395979" description="C2 and GRAM domain-containing protein At1g03370">
    <location>
        <begin position="1"/>
        <end position="1020"/>
    </location>
</feature>
<feature type="transmembrane region" description="Helical" evidence="1">
    <location>
        <begin position="454"/>
        <end position="474"/>
    </location>
</feature>
<feature type="domain" description="C2 1" evidence="2">
    <location>
        <begin position="1"/>
        <end position="102"/>
    </location>
</feature>
<feature type="domain" description="VASt 1" evidence="3">
    <location>
        <begin position="249"/>
        <end position="421"/>
    </location>
</feature>
<feature type="domain" description="C2 2" evidence="2">
    <location>
        <begin position="517"/>
        <end position="635"/>
    </location>
</feature>
<feature type="domain" description="GRAM">
    <location>
        <begin position="689"/>
        <end position="752"/>
    </location>
</feature>
<feature type="domain" description="VASt 2" evidence="3">
    <location>
        <begin position="848"/>
        <end position="1010"/>
    </location>
</feature>
<feature type="region of interest" description="Disordered" evidence="4">
    <location>
        <begin position="134"/>
        <end position="172"/>
    </location>
</feature>
<feature type="compositionally biased region" description="Polar residues" evidence="4">
    <location>
        <begin position="134"/>
        <end position="144"/>
    </location>
</feature>
<feature type="compositionally biased region" description="Polar residues" evidence="4">
    <location>
        <begin position="158"/>
        <end position="172"/>
    </location>
</feature>
<feature type="binding site" evidence="2">
    <location>
        <position position="17"/>
    </location>
    <ligand>
        <name>Ca(2+)</name>
        <dbReference type="ChEBI" id="CHEBI:29108"/>
        <label>1</label>
    </ligand>
</feature>
<feature type="binding site" evidence="2">
    <location>
        <position position="17"/>
    </location>
    <ligand>
        <name>Ca(2+)</name>
        <dbReference type="ChEBI" id="CHEBI:29108"/>
        <label>2</label>
    </ligand>
</feature>
<feature type="binding site" evidence="2">
    <location>
        <position position="23"/>
    </location>
    <ligand>
        <name>Ca(2+)</name>
        <dbReference type="ChEBI" id="CHEBI:29108"/>
        <label>1</label>
    </ligand>
</feature>
<feature type="binding site" evidence="2">
    <location>
        <position position="69"/>
    </location>
    <ligand>
        <name>Ca(2+)</name>
        <dbReference type="ChEBI" id="CHEBI:29108"/>
        <label>1</label>
    </ligand>
</feature>
<feature type="binding site" evidence="2">
    <location>
        <position position="69"/>
    </location>
    <ligand>
        <name>Ca(2+)</name>
        <dbReference type="ChEBI" id="CHEBI:29108"/>
        <label>2</label>
    </ligand>
</feature>
<feature type="binding site" evidence="2">
    <location>
        <position position="71"/>
    </location>
    <ligand>
        <name>Ca(2+)</name>
        <dbReference type="ChEBI" id="CHEBI:29108"/>
        <label>1</label>
    </ligand>
</feature>
<feature type="binding site" evidence="2">
    <location>
        <position position="71"/>
    </location>
    <ligand>
        <name>Ca(2+)</name>
        <dbReference type="ChEBI" id="CHEBI:29108"/>
        <label>2</label>
    </ligand>
</feature>
<feature type="binding site" evidence="2">
    <location>
        <position position="77"/>
    </location>
    <ligand>
        <name>Ca(2+)</name>
        <dbReference type="ChEBI" id="CHEBI:29108"/>
        <label>2</label>
    </ligand>
</feature>
<feature type="binding site" evidence="2">
    <location>
        <position position="551"/>
    </location>
    <ligand>
        <name>Ca(2+)</name>
        <dbReference type="ChEBI" id="CHEBI:29108"/>
        <label>3</label>
    </ligand>
</feature>
<feature type="binding site" evidence="2">
    <location>
        <position position="557"/>
    </location>
    <ligand>
        <name>Ca(2+)</name>
        <dbReference type="ChEBI" id="CHEBI:29108"/>
        <label>3</label>
    </ligand>
</feature>
<feature type="binding site" evidence="2">
    <location>
        <position position="604"/>
    </location>
    <ligand>
        <name>Ca(2+)</name>
        <dbReference type="ChEBI" id="CHEBI:29108"/>
        <label>3</label>
    </ligand>
</feature>
<feature type="binding site" evidence="2">
    <location>
        <position position="605"/>
    </location>
    <ligand>
        <name>Ca(2+)</name>
        <dbReference type="ChEBI" id="CHEBI:29108"/>
        <label>3</label>
    </ligand>
</feature>
<feature type="binding site" evidence="2">
    <location>
        <position position="606"/>
    </location>
    <ligand>
        <name>Ca(2+)</name>
        <dbReference type="ChEBI" id="CHEBI:29108"/>
        <label>3</label>
    </ligand>
</feature>
<sequence>MKLQVRVVEARNLPAMDLNGFSDPYVRLQLGKQRSRTKVVKKNLNPKWTEDFSFGVDDLNDELVVSVLDEDKYFNDDFVGQVRVSVSLVFDAENQSLGTVWYPLNPKKKGSKKDCGEILLKICFSQKNSVLDLTSSGDQTSASRSPDLRLESPIDPSTCASPSRSDDASSIPQTTFAGRFTQIFQKNAITATPTQSSSRSIDASDLSEISKPVFSLELSEDESSSTSFEELLKAMESKDQGSEPPSNLSGGVVVDQLFMISPSDLNIVLFASDSSFYASLTELQGTTEVQIGPWKAENDGESVKRVVSYLKAATKLIKAVKGTEEQTYLKADGEVYAVLASVATPDVPFGGTFKVEVLYCISPGPELPSGEQCSRLVVSWRLNFLQSTMMRGMIENGARQGLKDNFEQYANLLAQSVKPVDSKDIGLNKEQALSSLQAEPQSDWKLAVQYFANFTVLSTFLIGIYVFVHIVFAIPSAIQGLEFNGLDLPDSIGEFVVSGVLVLQCERVLQLISRFMQARKQKGSDHGIKAHGDGWLLTVALIEGVDLAAVDPSGHCDPYIVFTSNGKTRTSSIKFQKSNPQWNEIFEFDAMADPPSVLNVEVFDFDGPFDEAVSLGHAEVNFVRSNISDLADVWVPLQGKLAQACQSKLHLRIFLDHTGGGDVVRDYLNKMEKEVGKKINVRSPQTNSAFQKLFGLPQEEFLINDFTCHLKRKMPLQGRLFLSARIVGFYASIFGNKTKFFFLWEDIEEIQVLPPTLASMGSPIVVMTLRPNRGLDARIGAKTHDEEGRLKFHFHSFVSFNVAQKTIMALWKAKSLTPEQKVQAVEEESEQKLQSEESGLFLGVDDVRFSEVFSLTLPVPVSFFMELFGGGEVDRKAMERAGCQSYSCSPWESEKDDVYERQTYYRDKRISRYRGEVTSTQQKSLVPEKNGWLVEEVMTLHGVPLGDYFNLHLRYQMEESTSKPKTTYVRVYFGIEWLKSTRHQKRVTKNILVNLQDRLKMTFGFLEKEYSSRQQQQQVT</sequence>
<proteinExistence type="evidence at transcript level"/>
<reference key="1">
    <citation type="journal article" date="2000" name="Nature">
        <title>Sequence and analysis of chromosome 1 of the plant Arabidopsis thaliana.</title>
        <authorList>
            <person name="Theologis A."/>
            <person name="Ecker J.R."/>
            <person name="Palm C.J."/>
            <person name="Federspiel N.A."/>
            <person name="Kaul S."/>
            <person name="White O."/>
            <person name="Alonso J."/>
            <person name="Altafi H."/>
            <person name="Araujo R."/>
            <person name="Bowman C.L."/>
            <person name="Brooks S.Y."/>
            <person name="Buehler E."/>
            <person name="Chan A."/>
            <person name="Chao Q."/>
            <person name="Chen H."/>
            <person name="Cheuk R.F."/>
            <person name="Chin C.W."/>
            <person name="Chung M.K."/>
            <person name="Conn L."/>
            <person name="Conway A.B."/>
            <person name="Conway A.R."/>
            <person name="Creasy T.H."/>
            <person name="Dewar K."/>
            <person name="Dunn P."/>
            <person name="Etgu P."/>
            <person name="Feldblyum T.V."/>
            <person name="Feng J.-D."/>
            <person name="Fong B."/>
            <person name="Fujii C.Y."/>
            <person name="Gill J.E."/>
            <person name="Goldsmith A.D."/>
            <person name="Haas B."/>
            <person name="Hansen N.F."/>
            <person name="Hughes B."/>
            <person name="Huizar L."/>
            <person name="Hunter J.L."/>
            <person name="Jenkins J."/>
            <person name="Johnson-Hopson C."/>
            <person name="Khan S."/>
            <person name="Khaykin E."/>
            <person name="Kim C.J."/>
            <person name="Koo H.L."/>
            <person name="Kremenetskaia I."/>
            <person name="Kurtz D.B."/>
            <person name="Kwan A."/>
            <person name="Lam B."/>
            <person name="Langin-Hooper S."/>
            <person name="Lee A."/>
            <person name="Lee J.M."/>
            <person name="Lenz C.A."/>
            <person name="Li J.H."/>
            <person name="Li Y.-P."/>
            <person name="Lin X."/>
            <person name="Liu S.X."/>
            <person name="Liu Z.A."/>
            <person name="Luros J.S."/>
            <person name="Maiti R."/>
            <person name="Marziali A."/>
            <person name="Militscher J."/>
            <person name="Miranda M."/>
            <person name="Nguyen M."/>
            <person name="Nierman W.C."/>
            <person name="Osborne B.I."/>
            <person name="Pai G."/>
            <person name="Peterson J."/>
            <person name="Pham P.K."/>
            <person name="Rizzo M."/>
            <person name="Rooney T."/>
            <person name="Rowley D."/>
            <person name="Sakano H."/>
            <person name="Salzberg S.L."/>
            <person name="Schwartz J.R."/>
            <person name="Shinn P."/>
            <person name="Southwick A.M."/>
            <person name="Sun H."/>
            <person name="Tallon L.J."/>
            <person name="Tambunga G."/>
            <person name="Toriumi M.J."/>
            <person name="Town C.D."/>
            <person name="Utterback T."/>
            <person name="Van Aken S."/>
            <person name="Vaysberg M."/>
            <person name="Vysotskaia V.S."/>
            <person name="Walker M."/>
            <person name="Wu D."/>
            <person name="Yu G."/>
            <person name="Fraser C.M."/>
            <person name="Venter J.C."/>
            <person name="Davis R.W."/>
        </authorList>
    </citation>
    <scope>NUCLEOTIDE SEQUENCE [LARGE SCALE GENOMIC DNA]</scope>
    <source>
        <strain>cv. Columbia</strain>
    </source>
</reference>
<reference key="2">
    <citation type="journal article" date="2017" name="Plant J.">
        <title>Araport11: a complete reannotation of the Arabidopsis thaliana reference genome.</title>
        <authorList>
            <person name="Cheng C.Y."/>
            <person name="Krishnakumar V."/>
            <person name="Chan A.P."/>
            <person name="Thibaud-Nissen F."/>
            <person name="Schobel S."/>
            <person name="Town C.D."/>
        </authorList>
    </citation>
    <scope>GENOME REANNOTATION</scope>
    <source>
        <strain>cv. Columbia</strain>
    </source>
</reference>
<reference key="3">
    <citation type="journal article" date="2003" name="Science">
        <title>Empirical analysis of transcriptional activity in the Arabidopsis genome.</title>
        <authorList>
            <person name="Yamada K."/>
            <person name="Lim J."/>
            <person name="Dale J.M."/>
            <person name="Chen H."/>
            <person name="Shinn P."/>
            <person name="Palm C.J."/>
            <person name="Southwick A.M."/>
            <person name="Wu H.C."/>
            <person name="Kim C.J."/>
            <person name="Nguyen M."/>
            <person name="Pham P.K."/>
            <person name="Cheuk R.F."/>
            <person name="Karlin-Newmann G."/>
            <person name="Liu S.X."/>
            <person name="Lam B."/>
            <person name="Sakano H."/>
            <person name="Wu T."/>
            <person name="Yu G."/>
            <person name="Miranda M."/>
            <person name="Quach H.L."/>
            <person name="Tripp M."/>
            <person name="Chang C.H."/>
            <person name="Lee J.M."/>
            <person name="Toriumi M.J."/>
            <person name="Chan M.M."/>
            <person name="Tang C.C."/>
            <person name="Onodera C.S."/>
            <person name="Deng J.M."/>
            <person name="Akiyama K."/>
            <person name="Ansari Y."/>
            <person name="Arakawa T."/>
            <person name="Banh J."/>
            <person name="Banno F."/>
            <person name="Bowser L."/>
            <person name="Brooks S.Y."/>
            <person name="Carninci P."/>
            <person name="Chao Q."/>
            <person name="Choy N."/>
            <person name="Enju A."/>
            <person name="Goldsmith A.D."/>
            <person name="Gurjal M."/>
            <person name="Hansen N.F."/>
            <person name="Hayashizaki Y."/>
            <person name="Johnson-Hopson C."/>
            <person name="Hsuan V.W."/>
            <person name="Iida K."/>
            <person name="Karnes M."/>
            <person name="Khan S."/>
            <person name="Koesema E."/>
            <person name="Ishida J."/>
            <person name="Jiang P.X."/>
            <person name="Jones T."/>
            <person name="Kawai J."/>
            <person name="Kamiya A."/>
            <person name="Meyers C."/>
            <person name="Nakajima M."/>
            <person name="Narusaka M."/>
            <person name="Seki M."/>
            <person name="Sakurai T."/>
            <person name="Satou M."/>
            <person name="Tamse R."/>
            <person name="Vaysberg M."/>
            <person name="Wallender E.K."/>
            <person name="Wong C."/>
            <person name="Yamamura Y."/>
            <person name="Yuan S."/>
            <person name="Shinozaki K."/>
            <person name="Davis R.W."/>
            <person name="Theologis A."/>
            <person name="Ecker J.R."/>
        </authorList>
    </citation>
    <scope>NUCLEOTIDE SEQUENCE [LARGE SCALE MRNA]</scope>
    <source>
        <strain>cv. Columbia</strain>
    </source>
</reference>
<reference key="4">
    <citation type="journal article" date="2008" name="Dev. Biol.">
        <title>Comparative transcriptional profiling and evolutionary analysis of the GRAM domain family in eukaryotes.</title>
        <authorList>
            <person name="Jiang S.Y."/>
            <person name="Ramamoorthy R."/>
            <person name="Ramachandran S."/>
        </authorList>
    </citation>
    <scope>INDUCTION</scope>
</reference>
<gene>
    <name type="ordered locus">At1g03370</name>
    <name type="ORF">F15K9.2</name>
</gene>
<accession>Q9ZVT9</accession>
<accession>Q7EAV1</accession>
<protein>
    <recommendedName>
        <fullName>C2 and GRAM domain-containing protein At1g03370</fullName>
    </recommendedName>
</protein>